<gene>
    <name type="primary">PNC1</name>
    <name type="ordered locus">Glyma02g11800</name>
</gene>
<dbReference type="EMBL" id="AB442083">
    <property type="protein sequence ID" value="BAH03204.1"/>
    <property type="molecule type" value="mRNA"/>
</dbReference>
<dbReference type="EMBL" id="CM000835">
    <property type="status" value="NOT_ANNOTATED_CDS"/>
    <property type="molecule type" value="Genomic_DNA"/>
</dbReference>
<dbReference type="RefSeq" id="NP_001235739.1">
    <property type="nucleotide sequence ID" value="NM_001248810.1"/>
</dbReference>
<dbReference type="SMR" id="B6ZJZ9"/>
<dbReference type="FunCoup" id="B6ZJZ9">
    <property type="interactions" value="1166"/>
</dbReference>
<dbReference type="STRING" id="3847.B6ZJZ9"/>
<dbReference type="PaxDb" id="3847-GLYMA02G11800.1"/>
<dbReference type="EnsemblPlants" id="KRH70707">
    <property type="protein sequence ID" value="KRH70707"/>
    <property type="gene ID" value="GLYMA_02G106100"/>
</dbReference>
<dbReference type="EnsemblPlants" id="KRH70708">
    <property type="protein sequence ID" value="KRH70708"/>
    <property type="gene ID" value="GLYMA_02G106100"/>
</dbReference>
<dbReference type="GeneID" id="100301879"/>
<dbReference type="Gramene" id="KRH70707">
    <property type="protein sequence ID" value="KRH70707"/>
    <property type="gene ID" value="GLYMA_02G106100"/>
</dbReference>
<dbReference type="Gramene" id="KRH70708">
    <property type="protein sequence ID" value="KRH70708"/>
    <property type="gene ID" value="GLYMA_02G106100"/>
</dbReference>
<dbReference type="KEGG" id="gmx:100301879"/>
<dbReference type="eggNOG" id="KOG0769">
    <property type="taxonomic scope" value="Eukaryota"/>
</dbReference>
<dbReference type="HOGENOM" id="CLU_015166_6_3_1"/>
<dbReference type="InParanoid" id="B6ZJZ9"/>
<dbReference type="OMA" id="PLEMINT"/>
<dbReference type="OrthoDB" id="446044at2759"/>
<dbReference type="Proteomes" id="UP000008827">
    <property type="component" value="Chromosome 2"/>
</dbReference>
<dbReference type="GO" id="GO:0005778">
    <property type="term" value="C:peroxisomal membrane"/>
    <property type="evidence" value="ECO:0000318"/>
    <property type="project" value="GO_Central"/>
</dbReference>
<dbReference type="GO" id="GO:0005777">
    <property type="term" value="C:peroxisome"/>
    <property type="evidence" value="ECO:0000314"/>
    <property type="project" value="UniProtKB"/>
</dbReference>
<dbReference type="GO" id="GO:0015217">
    <property type="term" value="F:ADP transmembrane transporter activity"/>
    <property type="evidence" value="ECO:0000314"/>
    <property type="project" value="UniProtKB"/>
</dbReference>
<dbReference type="GO" id="GO:0015297">
    <property type="term" value="F:antiporter activity"/>
    <property type="evidence" value="ECO:0007669"/>
    <property type="project" value="UniProtKB-KW"/>
</dbReference>
<dbReference type="GO" id="GO:0005347">
    <property type="term" value="F:ATP transmembrane transporter activity"/>
    <property type="evidence" value="ECO:0000314"/>
    <property type="project" value="UniProtKB"/>
</dbReference>
<dbReference type="GO" id="GO:0015866">
    <property type="term" value="P:ADP transport"/>
    <property type="evidence" value="ECO:0000314"/>
    <property type="project" value="UniProtKB"/>
</dbReference>
<dbReference type="GO" id="GO:0015867">
    <property type="term" value="P:ATP transport"/>
    <property type="evidence" value="ECO:0000314"/>
    <property type="project" value="UniProtKB"/>
</dbReference>
<dbReference type="GO" id="GO:0006635">
    <property type="term" value="P:fatty acid beta-oxidation"/>
    <property type="evidence" value="ECO:0000250"/>
    <property type="project" value="UniProtKB"/>
</dbReference>
<dbReference type="GO" id="GO:0007031">
    <property type="term" value="P:peroxisome organization"/>
    <property type="evidence" value="ECO:0000318"/>
    <property type="project" value="GO_Central"/>
</dbReference>
<dbReference type="GO" id="GO:0090351">
    <property type="term" value="P:seedling development"/>
    <property type="evidence" value="ECO:0000250"/>
    <property type="project" value="UniProtKB"/>
</dbReference>
<dbReference type="FunFam" id="1.50.40.10:FF:000044">
    <property type="entry name" value="Peroxisomal adenine nucleotide carrier 1"/>
    <property type="match status" value="1"/>
</dbReference>
<dbReference type="Gene3D" id="1.50.40.10">
    <property type="entry name" value="Mitochondrial carrier domain"/>
    <property type="match status" value="1"/>
</dbReference>
<dbReference type="InterPro" id="IPR002067">
    <property type="entry name" value="Mit_carrier"/>
</dbReference>
<dbReference type="InterPro" id="IPR018108">
    <property type="entry name" value="Mitochondrial_sb/sol_carrier"/>
</dbReference>
<dbReference type="InterPro" id="IPR023395">
    <property type="entry name" value="Mt_carrier_dom_sf"/>
</dbReference>
<dbReference type="InterPro" id="IPR045900">
    <property type="entry name" value="Peroxisomal_Ade_carrier"/>
</dbReference>
<dbReference type="PANTHER" id="PTHR46650:SF4">
    <property type="entry name" value="PEROXISOMAL ADENINE NUCLEOTIDE CARRIER 1"/>
    <property type="match status" value="1"/>
</dbReference>
<dbReference type="PANTHER" id="PTHR46650">
    <property type="entry name" value="PEROXISOMAL ADENINE NUCLEOTIDE TRANSPORTER 1"/>
    <property type="match status" value="1"/>
</dbReference>
<dbReference type="Pfam" id="PF00153">
    <property type="entry name" value="Mito_carr"/>
    <property type="match status" value="3"/>
</dbReference>
<dbReference type="PRINTS" id="PR00926">
    <property type="entry name" value="MITOCARRIER"/>
</dbReference>
<dbReference type="SUPFAM" id="SSF103506">
    <property type="entry name" value="Mitochondrial carrier"/>
    <property type="match status" value="1"/>
</dbReference>
<dbReference type="PROSITE" id="PS50920">
    <property type="entry name" value="SOLCAR"/>
    <property type="match status" value="3"/>
</dbReference>
<evidence type="ECO:0000255" key="1"/>
<evidence type="ECO:0000269" key="2">
    <source>
    </source>
</evidence>
<evidence type="ECO:0000305" key="3"/>
<feature type="chain" id="PRO_0000420692" description="Peroxisomal adenine nucleotide carrier 1">
    <location>
        <begin position="1"/>
        <end position="318"/>
    </location>
</feature>
<feature type="transmembrane region" description="Helical; Name=1" evidence="1">
    <location>
        <begin position="8"/>
        <end position="28"/>
    </location>
</feature>
<feature type="transmembrane region" description="Helical; Name=2" evidence="1">
    <location>
        <begin position="104"/>
        <end position="124"/>
    </location>
</feature>
<feature type="transmembrane region" description="Helical; Name=3" evidence="1">
    <location>
        <begin position="158"/>
        <end position="178"/>
    </location>
</feature>
<feature type="transmembrane region" description="Helical; Name=4" evidence="1">
    <location>
        <begin position="201"/>
        <end position="221"/>
    </location>
</feature>
<feature type="transmembrane region" description="Helical; Name=5" evidence="1">
    <location>
        <begin position="252"/>
        <end position="272"/>
    </location>
</feature>
<feature type="transmembrane region" description="Helical; Name=6" evidence="1">
    <location>
        <begin position="284"/>
        <end position="304"/>
    </location>
</feature>
<feature type="repeat" description="Solcar 1">
    <location>
        <begin position="5"/>
        <end position="94"/>
    </location>
</feature>
<feature type="repeat" description="Solcar 2">
    <location>
        <begin position="104"/>
        <end position="184"/>
    </location>
</feature>
<feature type="repeat" description="Solcar 3">
    <location>
        <begin position="202"/>
        <end position="296"/>
    </location>
</feature>
<reference key="1">
    <citation type="journal article" date="2008" name="Plant Cell">
        <title>Proteomic identification and characterization of a novel peroxisomal adenine nucleotide transporter supplying ATP for fatty acid beta-oxidation in soybean and Arabidopsis.</title>
        <authorList>
            <person name="Arai Y."/>
            <person name="Hayashi M."/>
            <person name="Nishimura M."/>
        </authorList>
    </citation>
    <scope>NUCLEOTIDE SEQUENCE [MRNA]</scope>
    <scope>FUNCTION</scope>
    <scope>SUBCELLULAR LOCATION</scope>
    <scope>DEVELOPMENTAL STAGE</scope>
    <scope>INDUCTION</scope>
</reference>
<reference key="2">
    <citation type="journal article" date="2010" name="Nature">
        <title>Genome sequence of the palaeopolyploid soybean.</title>
        <authorList>
            <person name="Schmutz J."/>
            <person name="Cannon S.B."/>
            <person name="Schlueter J."/>
            <person name="Ma J."/>
            <person name="Mitros T."/>
            <person name="Nelson W."/>
            <person name="Hyten D.L."/>
            <person name="Song Q."/>
            <person name="Thelen J.J."/>
            <person name="Cheng J."/>
            <person name="Xu D."/>
            <person name="Hellsten U."/>
            <person name="May G.D."/>
            <person name="Yu Y."/>
            <person name="Sakurai T."/>
            <person name="Umezawa T."/>
            <person name="Bhattacharyya M.K."/>
            <person name="Sandhu D."/>
            <person name="Valliyodan B."/>
            <person name="Lindquist E."/>
            <person name="Peto M."/>
            <person name="Grant D."/>
            <person name="Shu S."/>
            <person name="Goodstein D."/>
            <person name="Barry K."/>
            <person name="Futrell-Griggs M."/>
            <person name="Abernathy B."/>
            <person name="Du J."/>
            <person name="Tian Z."/>
            <person name="Zhu L."/>
            <person name="Gill N."/>
            <person name="Joshi T."/>
            <person name="Libault M."/>
            <person name="Sethuraman A."/>
            <person name="Zhang X.-C."/>
            <person name="Shinozaki K."/>
            <person name="Nguyen H.T."/>
            <person name="Wing R.A."/>
            <person name="Cregan P."/>
            <person name="Specht J."/>
            <person name="Grimwood J."/>
            <person name="Rokhsar D."/>
            <person name="Stacey G."/>
            <person name="Shoemaker R.C."/>
            <person name="Jackson S.A."/>
        </authorList>
    </citation>
    <scope>NUCLEOTIDE SEQUENCE [LARGE SCALE GENOMIC DNA]</scope>
    <source>
        <strain>cv. Williams 82</strain>
    </source>
</reference>
<keyword id="KW-0050">Antiport</keyword>
<keyword id="KW-0472">Membrane</keyword>
<keyword id="KW-0576">Peroxisome</keyword>
<keyword id="KW-1185">Reference proteome</keyword>
<keyword id="KW-0677">Repeat</keyword>
<keyword id="KW-0812">Transmembrane</keyword>
<keyword id="KW-1133">Transmembrane helix</keyword>
<keyword id="KW-0813">Transport</keyword>
<proteinExistence type="evidence at transcript level"/>
<protein>
    <recommendedName>
        <fullName>Peroxisomal adenine nucleotide carrier 1</fullName>
        <shortName>GmPNC1</shortName>
    </recommendedName>
</protein>
<comment type="function">
    <text evidence="2">Peroxisomal adenine nucleotide transporter catalyzing the counterexchange of ATP with AMP. ATP is needed by reactions that generate acyl-CoA for peroxisomal fatty acid beta-oxidation during postgerminative growth. Required for the conversion of seed-reserved triacylglycerols into sucrose that is necessary for growth before the onset of photosynthesis.</text>
</comment>
<comment type="subcellular location">
    <subcellularLocation>
        <location evidence="2">Peroxisome membrane</location>
        <topology evidence="2">Multi-pass membrane protein</topology>
    </subcellularLocation>
</comment>
<comment type="developmental stage">
    <text evidence="2">Increased expression until 5 days after germination and then declines during growth under constant darkness.</text>
</comment>
<comment type="induction">
    <text evidence="2">Down-regulated upon illumination in seedlings germinated in the dark.</text>
</comment>
<comment type="similarity">
    <text evidence="3">Belongs to the mitochondrial carrier (TC 2.A.29) family.</text>
</comment>
<organism>
    <name type="scientific">Glycine max</name>
    <name type="common">Soybean</name>
    <name type="synonym">Glycine hispida</name>
    <dbReference type="NCBI Taxonomy" id="3847"/>
    <lineage>
        <taxon>Eukaryota</taxon>
        <taxon>Viridiplantae</taxon>
        <taxon>Streptophyta</taxon>
        <taxon>Embryophyta</taxon>
        <taxon>Tracheophyta</taxon>
        <taxon>Spermatophyta</taxon>
        <taxon>Magnoliopsida</taxon>
        <taxon>eudicotyledons</taxon>
        <taxon>Gunneridae</taxon>
        <taxon>Pentapetalae</taxon>
        <taxon>rosids</taxon>
        <taxon>fabids</taxon>
        <taxon>Fabales</taxon>
        <taxon>Fabaceae</taxon>
        <taxon>Papilionoideae</taxon>
        <taxon>50 kb inversion clade</taxon>
        <taxon>NPAAA clade</taxon>
        <taxon>indigoferoid/millettioid clade</taxon>
        <taxon>Phaseoleae</taxon>
        <taxon>Glycine</taxon>
        <taxon>Glycine subgen. Soja</taxon>
    </lineage>
</organism>
<name>PNC1_SOYBN</name>
<accession>B6ZJZ9</accession>
<sequence length="318" mass="34769">MNVDLESLAEATSGAIGSLISTTILYPLDTCKTKYQAEARSSGRTKYRNLTDVLLEAISNRQVLSLYQGLGTKNLQSFISQFVYFYGYSYFKRLYLEKSGYKSIGTKANLVIAAAAGACTAIATQPLDTASSRMQTSEFGKSKGLLKTLTEGNWSDAFDGLSISLLLTSNPAIQYTVFDQLKQRALKNKQDNADKGTSPASLSAFMAFLLGAISKSIATCLTYPAIRCKVIIQAADSAEETSKTKIKSQKTVLSVLYGIWKREGILGYFKGLHAQILKTVLSSALLLMIKEKISASTWVLILALKRYLLLPRGKVKNL</sequence>